<organism>
    <name type="scientific">Sulfurimonas denitrificans (strain ATCC 33889 / DSM 1251)</name>
    <name type="common">Thiomicrospira denitrificans (strain ATCC 33889 / DSM 1251)</name>
    <dbReference type="NCBI Taxonomy" id="326298"/>
    <lineage>
        <taxon>Bacteria</taxon>
        <taxon>Pseudomonadati</taxon>
        <taxon>Campylobacterota</taxon>
        <taxon>Epsilonproteobacteria</taxon>
        <taxon>Campylobacterales</taxon>
        <taxon>Sulfurimonadaceae</taxon>
        <taxon>Sulfurimonas</taxon>
    </lineage>
</organism>
<accession>Q30SL9</accession>
<gene>
    <name evidence="1" type="primary">flgH</name>
    <name type="ordered locus">Suden_0733</name>
</gene>
<keyword id="KW-0975">Bacterial flagellum</keyword>
<keyword id="KW-0998">Cell outer membrane</keyword>
<keyword id="KW-0449">Lipoprotein</keyword>
<keyword id="KW-0472">Membrane</keyword>
<keyword id="KW-0564">Palmitate</keyword>
<keyword id="KW-1185">Reference proteome</keyword>
<keyword id="KW-0732">Signal</keyword>
<feature type="signal peptide" evidence="1">
    <location>
        <begin position="1"/>
        <end position="20"/>
    </location>
</feature>
<feature type="chain" id="PRO_0000236840" description="Flagellar L-ring protein">
    <location>
        <begin position="21"/>
        <end position="240"/>
    </location>
</feature>
<feature type="lipid moiety-binding region" description="N-palmitoyl cysteine" evidence="1">
    <location>
        <position position="21"/>
    </location>
</feature>
<feature type="lipid moiety-binding region" description="S-diacylglycerol cysteine" evidence="1">
    <location>
        <position position="21"/>
    </location>
</feature>
<evidence type="ECO:0000255" key="1">
    <source>
        <dbReference type="HAMAP-Rule" id="MF_00415"/>
    </source>
</evidence>
<reference key="1">
    <citation type="journal article" date="2008" name="Appl. Environ. Microbiol.">
        <title>Genome of the epsilonproteobacterial chemolithoautotroph Sulfurimonas denitrificans.</title>
        <authorList>
            <person name="Sievert S.M."/>
            <person name="Scott K.M."/>
            <person name="Klotz M.G."/>
            <person name="Chain P.S.G."/>
            <person name="Hauser L.J."/>
            <person name="Hemp J."/>
            <person name="Huegler M."/>
            <person name="Land M."/>
            <person name="Lapidus A."/>
            <person name="Larimer F.W."/>
            <person name="Lucas S."/>
            <person name="Malfatti S.A."/>
            <person name="Meyer F."/>
            <person name="Paulsen I.T."/>
            <person name="Ren Q."/>
            <person name="Simon J."/>
            <person name="Bailey K."/>
            <person name="Diaz E."/>
            <person name="Fitzpatrick K.A."/>
            <person name="Glover B."/>
            <person name="Gwatney N."/>
            <person name="Korajkic A."/>
            <person name="Long A."/>
            <person name="Mobberley J.M."/>
            <person name="Pantry S.N."/>
            <person name="Pazder G."/>
            <person name="Peterson S."/>
            <person name="Quintanilla J.D."/>
            <person name="Sprinkle R."/>
            <person name="Stephens J."/>
            <person name="Thomas P."/>
            <person name="Vaughn R."/>
            <person name="Weber M.J."/>
            <person name="Wooten L.L."/>
        </authorList>
    </citation>
    <scope>NUCLEOTIDE SEQUENCE [LARGE SCALE GENOMIC DNA]</scope>
    <source>
        <strain>ATCC 33889 / DSM 1251</strain>
    </source>
</reference>
<proteinExistence type="inferred from homology"/>
<comment type="function">
    <text evidence="1">Assembles around the rod to form the L-ring and probably protects the motor/basal body from shearing forces during rotation.</text>
</comment>
<comment type="subunit">
    <text evidence="1">The basal body constitutes a major portion of the flagellar organelle and consists of four rings (L,P,S, and M) mounted on a central rod.</text>
</comment>
<comment type="subcellular location">
    <subcellularLocation>
        <location evidence="1">Cell outer membrane</location>
        <topology evidence="1">Lipid-anchor</topology>
    </subcellularLocation>
    <subcellularLocation>
        <location evidence="1">Bacterial flagellum basal body</location>
    </subcellularLocation>
</comment>
<comment type="similarity">
    <text evidence="1">Belongs to the FlgH family.</text>
</comment>
<protein>
    <recommendedName>
        <fullName evidence="1">Flagellar L-ring protein</fullName>
    </recommendedName>
    <alternativeName>
        <fullName evidence="1">Basal body L-ring protein</fullName>
    </alternativeName>
</protein>
<sequence>MIRNFLLFFMPIYAILFLSGCTANLSDPEIDFEPPAYVEEMPSKEDNKDFTSVGSVFGQGENPLFSDHKAMHVNDIVTVIISENTQSSNSGSKQISESDSLNLGGGAFTSAGTNSAVNSAVSKLNGIANLGFGSTSDSAYKGQGSATKDASFTTTVSARIVKVLQNGNYFISGKREILVDNQKQIIQIGGVIRPYDIDQGNRINSSQMSEAKILYKTQGDVERATDRGWGTKIIQSVWPF</sequence>
<name>FLGH_SULDN</name>
<dbReference type="EMBL" id="CP000153">
    <property type="protein sequence ID" value="ABB44012.1"/>
    <property type="molecule type" value="Genomic_DNA"/>
</dbReference>
<dbReference type="RefSeq" id="WP_011372366.1">
    <property type="nucleotide sequence ID" value="NC_007575.1"/>
</dbReference>
<dbReference type="SMR" id="Q30SL9"/>
<dbReference type="STRING" id="326298.Suden_0733"/>
<dbReference type="KEGG" id="tdn:Suden_0733"/>
<dbReference type="eggNOG" id="COG2063">
    <property type="taxonomic scope" value="Bacteria"/>
</dbReference>
<dbReference type="HOGENOM" id="CLU_069313_1_1_7"/>
<dbReference type="OrthoDB" id="9789227at2"/>
<dbReference type="Proteomes" id="UP000002714">
    <property type="component" value="Chromosome"/>
</dbReference>
<dbReference type="GO" id="GO:0009427">
    <property type="term" value="C:bacterial-type flagellum basal body, distal rod, L ring"/>
    <property type="evidence" value="ECO:0007669"/>
    <property type="project" value="InterPro"/>
</dbReference>
<dbReference type="GO" id="GO:0009279">
    <property type="term" value="C:cell outer membrane"/>
    <property type="evidence" value="ECO:0007669"/>
    <property type="project" value="UniProtKB-SubCell"/>
</dbReference>
<dbReference type="GO" id="GO:0003774">
    <property type="term" value="F:cytoskeletal motor activity"/>
    <property type="evidence" value="ECO:0007669"/>
    <property type="project" value="InterPro"/>
</dbReference>
<dbReference type="GO" id="GO:0071973">
    <property type="term" value="P:bacterial-type flagellum-dependent cell motility"/>
    <property type="evidence" value="ECO:0007669"/>
    <property type="project" value="InterPro"/>
</dbReference>
<dbReference type="HAMAP" id="MF_00415">
    <property type="entry name" value="FlgH"/>
    <property type="match status" value="1"/>
</dbReference>
<dbReference type="InterPro" id="IPR000527">
    <property type="entry name" value="Flag_Lring"/>
</dbReference>
<dbReference type="NCBIfam" id="NF001303">
    <property type="entry name" value="PRK00249.1-3"/>
    <property type="match status" value="1"/>
</dbReference>
<dbReference type="PANTHER" id="PTHR34933">
    <property type="entry name" value="FLAGELLAR L-RING PROTEIN"/>
    <property type="match status" value="1"/>
</dbReference>
<dbReference type="PANTHER" id="PTHR34933:SF1">
    <property type="entry name" value="FLAGELLAR L-RING PROTEIN"/>
    <property type="match status" value="1"/>
</dbReference>
<dbReference type="Pfam" id="PF02107">
    <property type="entry name" value="FlgH"/>
    <property type="match status" value="1"/>
</dbReference>
<dbReference type="PRINTS" id="PR01008">
    <property type="entry name" value="FLGLRINGFLGH"/>
</dbReference>
<dbReference type="PROSITE" id="PS51257">
    <property type="entry name" value="PROKAR_LIPOPROTEIN"/>
    <property type="match status" value="1"/>
</dbReference>